<reference key="1">
    <citation type="journal article" date="1999" name="Nature">
        <title>Sequence and analysis of chromosome 2 of the plant Arabidopsis thaliana.</title>
        <authorList>
            <person name="Lin X."/>
            <person name="Kaul S."/>
            <person name="Rounsley S.D."/>
            <person name="Shea T.P."/>
            <person name="Benito M.-I."/>
            <person name="Town C.D."/>
            <person name="Fujii C.Y."/>
            <person name="Mason T.M."/>
            <person name="Bowman C.L."/>
            <person name="Barnstead M.E."/>
            <person name="Feldblyum T.V."/>
            <person name="Buell C.R."/>
            <person name="Ketchum K.A."/>
            <person name="Lee J.J."/>
            <person name="Ronning C.M."/>
            <person name="Koo H.L."/>
            <person name="Moffat K.S."/>
            <person name="Cronin L.A."/>
            <person name="Shen M."/>
            <person name="Pai G."/>
            <person name="Van Aken S."/>
            <person name="Umayam L."/>
            <person name="Tallon L.J."/>
            <person name="Gill J.E."/>
            <person name="Adams M.D."/>
            <person name="Carrera A.J."/>
            <person name="Creasy T.H."/>
            <person name="Goodman H.M."/>
            <person name="Somerville C.R."/>
            <person name="Copenhaver G.P."/>
            <person name="Preuss D."/>
            <person name="Nierman W.C."/>
            <person name="White O."/>
            <person name="Eisen J.A."/>
            <person name="Salzberg S.L."/>
            <person name="Fraser C.M."/>
            <person name="Venter J.C."/>
        </authorList>
    </citation>
    <scope>NUCLEOTIDE SEQUENCE [LARGE SCALE GENOMIC DNA]</scope>
    <source>
        <strain>cv. Columbia</strain>
    </source>
</reference>
<reference key="2">
    <citation type="journal article" date="2017" name="Plant J.">
        <title>Araport11: a complete reannotation of the Arabidopsis thaliana reference genome.</title>
        <authorList>
            <person name="Cheng C.Y."/>
            <person name="Krishnakumar V."/>
            <person name="Chan A.P."/>
            <person name="Thibaud-Nissen F."/>
            <person name="Schobel S."/>
            <person name="Town C.D."/>
        </authorList>
    </citation>
    <scope>GENOME REANNOTATION</scope>
    <source>
        <strain>cv. Columbia</strain>
    </source>
</reference>
<reference key="3">
    <citation type="journal article" date="2002" name="In Silico Biol.">
        <title>Peptomics, identification of novel cationic Arabidopsis peptides with conserved sequence motifs.</title>
        <authorList>
            <person name="Olsen A.N."/>
            <person name="Mundy J."/>
            <person name="Skriver K."/>
        </authorList>
    </citation>
    <scope>TISSUE SPECIFICITY</scope>
    <scope>GENE FAMILY</scope>
    <scope>NOMENCLATURE</scope>
</reference>
<organism>
    <name type="scientific">Arabidopsis thaliana</name>
    <name type="common">Mouse-ear cress</name>
    <dbReference type="NCBI Taxonomy" id="3702"/>
    <lineage>
        <taxon>Eukaryota</taxon>
        <taxon>Viridiplantae</taxon>
        <taxon>Streptophyta</taxon>
        <taxon>Embryophyta</taxon>
        <taxon>Tracheophyta</taxon>
        <taxon>Spermatophyta</taxon>
        <taxon>Magnoliopsida</taxon>
        <taxon>eudicotyledons</taxon>
        <taxon>Gunneridae</taxon>
        <taxon>Pentapetalae</taxon>
        <taxon>rosids</taxon>
        <taxon>malvids</taxon>
        <taxon>Brassicales</taxon>
        <taxon>Brassicaceae</taxon>
        <taxon>Camelineae</taxon>
        <taxon>Arabidopsis</taxon>
    </lineage>
</organism>
<name>RLF10_ARATH</name>
<protein>
    <recommendedName>
        <fullName>Protein RALF-like 10</fullName>
    </recommendedName>
</protein>
<proteinExistence type="evidence at transcript level"/>
<feature type="signal peptide" evidence="2">
    <location>
        <begin position="1"/>
        <end position="17"/>
    </location>
</feature>
<feature type="chain" id="PRO_0000420301" description="Protein RALF-like 10">
    <location>
        <begin position="18"/>
        <end position="73"/>
    </location>
</feature>
<feature type="disulfide bond" evidence="1">
    <location>
        <begin position="35"/>
        <end position="44"/>
    </location>
</feature>
<feature type="disulfide bond" evidence="1">
    <location>
        <begin position="64"/>
        <end position="70"/>
    </location>
</feature>
<keyword id="KW-1015">Disulfide bond</keyword>
<keyword id="KW-0372">Hormone</keyword>
<keyword id="KW-1185">Reference proteome</keyword>
<keyword id="KW-0964">Secreted</keyword>
<keyword id="KW-0732">Signal</keyword>
<comment type="function">
    <text evidence="1">Cell signaling peptide that may regulate plant stress, growth, and development. Mediates a rapid alkalinization of extracellular space by mediating a transient increase in the cytoplasmic Ca(2+) concentration leading to a calcium-dependent signaling events through a cell surface receptor and a concomitant activation of some intracellular mitogen-activated protein kinases (By similarity).</text>
</comment>
<comment type="subcellular location">
    <subcellularLocation>
        <location evidence="1">Secreted</location>
    </subcellularLocation>
</comment>
<comment type="tissue specificity">
    <text evidence="3">Expressed in flowers.</text>
</comment>
<comment type="similarity">
    <text evidence="4">Belongs to the plant rapid alkalinization factor (RALF) family.</text>
</comment>
<dbReference type="EMBL" id="AC002392">
    <property type="protein sequence ID" value="AAD12020.1"/>
    <property type="molecule type" value="Genomic_DNA"/>
</dbReference>
<dbReference type="EMBL" id="AC003673">
    <property type="protein sequence ID" value="AAM14886.1"/>
    <property type="molecule type" value="Genomic_DNA"/>
</dbReference>
<dbReference type="EMBL" id="CP002685">
    <property type="protein sequence ID" value="AEC06839.1"/>
    <property type="molecule type" value="Genomic_DNA"/>
</dbReference>
<dbReference type="PIR" id="T01630">
    <property type="entry name" value="T01630"/>
</dbReference>
<dbReference type="RefSeq" id="NP_179492.1">
    <property type="nucleotide sequence ID" value="NM_127459.2"/>
</dbReference>
<dbReference type="SMR" id="O65919"/>
<dbReference type="STRING" id="3702.O65919"/>
<dbReference type="PaxDb" id="3702-AT2G19020.1"/>
<dbReference type="EnsemblPlants" id="AT2G19020.1">
    <property type="protein sequence ID" value="AT2G19020.1"/>
    <property type="gene ID" value="AT2G19020"/>
</dbReference>
<dbReference type="GeneID" id="816419"/>
<dbReference type="Gramene" id="AT2G19020.1">
    <property type="protein sequence ID" value="AT2G19020.1"/>
    <property type="gene ID" value="AT2G19020"/>
</dbReference>
<dbReference type="KEGG" id="ath:AT2G19020"/>
<dbReference type="Araport" id="AT2G19020"/>
<dbReference type="TAIR" id="AT2G19020">
    <property type="gene designation" value="RALFL10"/>
</dbReference>
<dbReference type="eggNOG" id="ENOG502SYWJ">
    <property type="taxonomic scope" value="Eukaryota"/>
</dbReference>
<dbReference type="HOGENOM" id="CLU_200725_0_0_1"/>
<dbReference type="InParanoid" id="O65919"/>
<dbReference type="PhylomeDB" id="O65919"/>
<dbReference type="PRO" id="PR:O65919"/>
<dbReference type="Proteomes" id="UP000006548">
    <property type="component" value="Chromosome 2"/>
</dbReference>
<dbReference type="ExpressionAtlas" id="O65919">
    <property type="expression patterns" value="baseline"/>
</dbReference>
<dbReference type="GO" id="GO:0048046">
    <property type="term" value="C:apoplast"/>
    <property type="evidence" value="ECO:0000250"/>
    <property type="project" value="TAIR"/>
</dbReference>
<dbReference type="GO" id="GO:0005179">
    <property type="term" value="F:hormone activity"/>
    <property type="evidence" value="ECO:0000250"/>
    <property type="project" value="UniProtKB"/>
</dbReference>
<dbReference type="GO" id="GO:0019722">
    <property type="term" value="P:calcium-mediated signaling"/>
    <property type="evidence" value="ECO:0000250"/>
    <property type="project" value="UniProtKB"/>
</dbReference>
<dbReference type="GO" id="GO:0007267">
    <property type="term" value="P:cell-cell signaling"/>
    <property type="evidence" value="ECO:0000250"/>
    <property type="project" value="TAIR"/>
</dbReference>
<dbReference type="GO" id="GO:0040008">
    <property type="term" value="P:regulation of growth"/>
    <property type="evidence" value="ECO:0007669"/>
    <property type="project" value="UniProtKB-ARBA"/>
</dbReference>
<dbReference type="InterPro" id="IPR008801">
    <property type="entry name" value="RALF"/>
</dbReference>
<dbReference type="PANTHER" id="PTHR34270:SF5">
    <property type="entry name" value="PROTEIN RALF-LIKE 10-RELATED"/>
    <property type="match status" value="1"/>
</dbReference>
<dbReference type="PANTHER" id="PTHR34270">
    <property type="entry name" value="PROTEIN RALF-LIKE 15-RELATED"/>
    <property type="match status" value="1"/>
</dbReference>
<dbReference type="Pfam" id="PF05498">
    <property type="entry name" value="RALF"/>
    <property type="match status" value="1"/>
</dbReference>
<evidence type="ECO:0000250" key="1"/>
<evidence type="ECO:0000255" key="2"/>
<evidence type="ECO:0000269" key="3">
    <source>
    </source>
</evidence>
<evidence type="ECO:0000305" key="4"/>
<sequence>MKALVICLLVIFAAVIAVPVESRRKHLDYGVITKCAGPNPPPGCYPPGAQQKNPTPANEYRRGCSKITRCKRD</sequence>
<gene>
    <name type="primary">RALFL10</name>
    <name type="ordered locus">At2g19020</name>
    <name type="ORF">F19F24</name>
    <name type="ORF">T20K24.3</name>
</gene>
<accession>O65919</accession>